<comment type="subcellular location">
    <subcellularLocation>
        <location evidence="1">Cell inner membrane</location>
        <topology evidence="1">Single-pass membrane protein</topology>
    </subcellularLocation>
</comment>
<comment type="similarity">
    <text evidence="1">Belongs to the UPF0387 family.</text>
</comment>
<keyword id="KW-0997">Cell inner membrane</keyword>
<keyword id="KW-1003">Cell membrane</keyword>
<keyword id="KW-0472">Membrane</keyword>
<keyword id="KW-0812">Transmembrane</keyword>
<keyword id="KW-1133">Transmembrane helix</keyword>
<sequence length="35" mass="3580">MRVAKIGVIALFLLMAIGGIGGVMLAGYSFILRAG</sequence>
<feature type="chain" id="PRO_1000143737" description="UPF0387 membrane protein YohO">
    <location>
        <begin position="1"/>
        <end position="35"/>
    </location>
</feature>
<feature type="transmembrane region" description="Helical" evidence="1">
    <location>
        <begin position="6"/>
        <end position="26"/>
    </location>
</feature>
<accession>B5RC02</accession>
<reference key="1">
    <citation type="journal article" date="2008" name="Genome Res.">
        <title>Comparative genome analysis of Salmonella enteritidis PT4 and Salmonella gallinarum 287/91 provides insights into evolutionary and host adaptation pathways.</title>
        <authorList>
            <person name="Thomson N.R."/>
            <person name="Clayton D.J."/>
            <person name="Windhorst D."/>
            <person name="Vernikos G."/>
            <person name="Davidson S."/>
            <person name="Churcher C."/>
            <person name="Quail M.A."/>
            <person name="Stevens M."/>
            <person name="Jones M.A."/>
            <person name="Watson M."/>
            <person name="Barron A."/>
            <person name="Layton A."/>
            <person name="Pickard D."/>
            <person name="Kingsley R.A."/>
            <person name="Bignell A."/>
            <person name="Clark L."/>
            <person name="Harris B."/>
            <person name="Ormond D."/>
            <person name="Abdellah Z."/>
            <person name="Brooks K."/>
            <person name="Cherevach I."/>
            <person name="Chillingworth T."/>
            <person name="Woodward J."/>
            <person name="Norberczak H."/>
            <person name="Lord A."/>
            <person name="Arrowsmith C."/>
            <person name="Jagels K."/>
            <person name="Moule S."/>
            <person name="Mungall K."/>
            <person name="Saunders M."/>
            <person name="Whitehead S."/>
            <person name="Chabalgoity J.A."/>
            <person name="Maskell D."/>
            <person name="Humphreys T."/>
            <person name="Roberts M."/>
            <person name="Barrow P.A."/>
            <person name="Dougan G."/>
            <person name="Parkhill J."/>
        </authorList>
    </citation>
    <scope>NUCLEOTIDE SEQUENCE [LARGE SCALE GENOMIC DNA]</scope>
    <source>
        <strain>287/91 / NCTC 13346</strain>
    </source>
</reference>
<dbReference type="EMBL" id="AM933173">
    <property type="protein sequence ID" value="CAR38033.1"/>
    <property type="molecule type" value="Genomic_DNA"/>
</dbReference>
<dbReference type="RefSeq" id="WP_001261696.1">
    <property type="nucleotide sequence ID" value="NC_011274.1"/>
</dbReference>
<dbReference type="KEGG" id="seg:SG2197"/>
<dbReference type="HOGENOM" id="CLU_220259_0_0_6"/>
<dbReference type="Proteomes" id="UP000008321">
    <property type="component" value="Chromosome"/>
</dbReference>
<dbReference type="GO" id="GO:0005886">
    <property type="term" value="C:plasma membrane"/>
    <property type="evidence" value="ECO:0007669"/>
    <property type="project" value="UniProtKB-SubCell"/>
</dbReference>
<dbReference type="HAMAP" id="MF_01362">
    <property type="entry name" value="UPF0387"/>
    <property type="match status" value="1"/>
</dbReference>
<dbReference type="InterPro" id="IPR020870">
    <property type="entry name" value="UPF0387_membrane"/>
</dbReference>
<dbReference type="NCBIfam" id="NF010225">
    <property type="entry name" value="PRK13681.1"/>
    <property type="match status" value="1"/>
</dbReference>
<gene>
    <name evidence="1" type="primary">yohO</name>
    <name type="ordered locus">SG2197</name>
</gene>
<organism>
    <name type="scientific">Salmonella gallinarum (strain 287/91 / NCTC 13346)</name>
    <dbReference type="NCBI Taxonomy" id="550538"/>
    <lineage>
        <taxon>Bacteria</taxon>
        <taxon>Pseudomonadati</taxon>
        <taxon>Pseudomonadota</taxon>
        <taxon>Gammaproteobacteria</taxon>
        <taxon>Enterobacterales</taxon>
        <taxon>Enterobacteriaceae</taxon>
        <taxon>Salmonella</taxon>
    </lineage>
</organism>
<protein>
    <recommendedName>
        <fullName evidence="1">UPF0387 membrane protein YohO</fullName>
    </recommendedName>
</protein>
<name>YOHO_SALG2</name>
<evidence type="ECO:0000255" key="1">
    <source>
        <dbReference type="HAMAP-Rule" id="MF_01362"/>
    </source>
</evidence>
<proteinExistence type="inferred from homology"/>